<protein>
    <recommendedName>
        <fullName evidence="1">Large ribosomal subunit protein bL12</fullName>
    </recommendedName>
    <alternativeName>
        <fullName evidence="2">50S ribosomal protein L7/L12</fullName>
    </alternativeName>
</protein>
<sequence length="124" mass="12559">MAIAKEDILAAVEGMTVLELNELVKAFEEKFGVSAAAVAVAGPAAGGAAAAAEEKTEFTVVLAEAGSNKVAVIKAVREITGLGLKEAKDLVDGAPKPVKEGVDKASADEAKKKLEDAGAKVELK</sequence>
<reference key="1">
    <citation type="journal article" date="2004" name="Proc. Natl. Acad. Sci. U.S.A.">
        <title>Structural flexibility in the Burkholderia mallei genome.</title>
        <authorList>
            <person name="Nierman W.C."/>
            <person name="DeShazer D."/>
            <person name="Kim H.S."/>
            <person name="Tettelin H."/>
            <person name="Nelson K.E."/>
            <person name="Feldblyum T.V."/>
            <person name="Ulrich R.L."/>
            <person name="Ronning C.M."/>
            <person name="Brinkac L.M."/>
            <person name="Daugherty S.C."/>
            <person name="Davidsen T.D."/>
            <person name="DeBoy R.T."/>
            <person name="Dimitrov G."/>
            <person name="Dodson R.J."/>
            <person name="Durkin A.S."/>
            <person name="Gwinn M.L."/>
            <person name="Haft D.H."/>
            <person name="Khouri H.M."/>
            <person name="Kolonay J.F."/>
            <person name="Madupu R."/>
            <person name="Mohammoud Y."/>
            <person name="Nelson W.C."/>
            <person name="Radune D."/>
            <person name="Romero C.M."/>
            <person name="Sarria S."/>
            <person name="Selengut J."/>
            <person name="Shamblin C."/>
            <person name="Sullivan S.A."/>
            <person name="White O."/>
            <person name="Yu Y."/>
            <person name="Zafar N."/>
            <person name="Zhou L."/>
            <person name="Fraser C.M."/>
        </authorList>
    </citation>
    <scope>NUCLEOTIDE SEQUENCE [LARGE SCALE GENOMIC DNA]</scope>
    <source>
        <strain>ATCC 23344</strain>
    </source>
</reference>
<proteinExistence type="inferred from homology"/>
<feature type="chain" id="PRO_0000243400" description="Large ribosomal subunit protein bL12">
    <location>
        <begin position="1"/>
        <end position="124"/>
    </location>
</feature>
<gene>
    <name evidence="1" type="primary">rplL</name>
    <name type="ordered locus">BMA2642</name>
</gene>
<name>RL7_BURMA</name>
<keyword id="KW-1185">Reference proteome</keyword>
<keyword id="KW-0687">Ribonucleoprotein</keyword>
<keyword id="KW-0689">Ribosomal protein</keyword>
<dbReference type="EMBL" id="CP000010">
    <property type="protein sequence ID" value="AAU47879.1"/>
    <property type="molecule type" value="Genomic_DNA"/>
</dbReference>
<dbReference type="RefSeq" id="WP_004198366.1">
    <property type="nucleotide sequence ID" value="NC_006348.1"/>
</dbReference>
<dbReference type="RefSeq" id="YP_104175.1">
    <property type="nucleotide sequence ID" value="NC_006348.1"/>
</dbReference>
<dbReference type="SMR" id="Q62GJ6"/>
<dbReference type="GeneID" id="93061842"/>
<dbReference type="KEGG" id="bma:BMA2642"/>
<dbReference type="PATRIC" id="fig|243160.12.peg.2715"/>
<dbReference type="eggNOG" id="COG0222">
    <property type="taxonomic scope" value="Bacteria"/>
</dbReference>
<dbReference type="HOGENOM" id="CLU_086499_3_2_4"/>
<dbReference type="Proteomes" id="UP000006693">
    <property type="component" value="Chromosome 1"/>
</dbReference>
<dbReference type="GO" id="GO:0022625">
    <property type="term" value="C:cytosolic large ribosomal subunit"/>
    <property type="evidence" value="ECO:0007669"/>
    <property type="project" value="TreeGrafter"/>
</dbReference>
<dbReference type="GO" id="GO:0003729">
    <property type="term" value="F:mRNA binding"/>
    <property type="evidence" value="ECO:0007669"/>
    <property type="project" value="TreeGrafter"/>
</dbReference>
<dbReference type="GO" id="GO:0003735">
    <property type="term" value="F:structural constituent of ribosome"/>
    <property type="evidence" value="ECO:0007669"/>
    <property type="project" value="InterPro"/>
</dbReference>
<dbReference type="GO" id="GO:0006412">
    <property type="term" value="P:translation"/>
    <property type="evidence" value="ECO:0007669"/>
    <property type="project" value="UniProtKB-UniRule"/>
</dbReference>
<dbReference type="CDD" id="cd00387">
    <property type="entry name" value="Ribosomal_L7_L12"/>
    <property type="match status" value="1"/>
</dbReference>
<dbReference type="FunFam" id="3.30.1390.10:FF:000001">
    <property type="entry name" value="50S ribosomal protein L7/L12"/>
    <property type="match status" value="1"/>
</dbReference>
<dbReference type="Gene3D" id="3.30.1390.10">
    <property type="match status" value="1"/>
</dbReference>
<dbReference type="Gene3D" id="1.20.5.710">
    <property type="entry name" value="Single helix bin"/>
    <property type="match status" value="1"/>
</dbReference>
<dbReference type="HAMAP" id="MF_00368">
    <property type="entry name" value="Ribosomal_bL12"/>
    <property type="match status" value="1"/>
</dbReference>
<dbReference type="InterPro" id="IPR000206">
    <property type="entry name" value="Ribosomal_bL12"/>
</dbReference>
<dbReference type="InterPro" id="IPR013823">
    <property type="entry name" value="Ribosomal_bL12_C"/>
</dbReference>
<dbReference type="InterPro" id="IPR014719">
    <property type="entry name" value="Ribosomal_bL12_C/ClpS-like"/>
</dbReference>
<dbReference type="InterPro" id="IPR008932">
    <property type="entry name" value="Ribosomal_bL12_oligo"/>
</dbReference>
<dbReference type="InterPro" id="IPR036235">
    <property type="entry name" value="Ribosomal_bL12_oligo_N_sf"/>
</dbReference>
<dbReference type="NCBIfam" id="TIGR00855">
    <property type="entry name" value="L12"/>
    <property type="match status" value="1"/>
</dbReference>
<dbReference type="PANTHER" id="PTHR45987">
    <property type="entry name" value="39S RIBOSOMAL PROTEIN L12"/>
    <property type="match status" value="1"/>
</dbReference>
<dbReference type="PANTHER" id="PTHR45987:SF4">
    <property type="entry name" value="LARGE RIBOSOMAL SUBUNIT PROTEIN BL12M"/>
    <property type="match status" value="1"/>
</dbReference>
<dbReference type="Pfam" id="PF00542">
    <property type="entry name" value="Ribosomal_L12"/>
    <property type="match status" value="1"/>
</dbReference>
<dbReference type="Pfam" id="PF16320">
    <property type="entry name" value="Ribosomal_L12_N"/>
    <property type="match status" value="1"/>
</dbReference>
<dbReference type="SUPFAM" id="SSF54736">
    <property type="entry name" value="ClpS-like"/>
    <property type="match status" value="1"/>
</dbReference>
<dbReference type="SUPFAM" id="SSF48300">
    <property type="entry name" value="Ribosomal protein L7/12, oligomerisation (N-terminal) domain"/>
    <property type="match status" value="1"/>
</dbReference>
<organism>
    <name type="scientific">Burkholderia mallei (strain ATCC 23344)</name>
    <dbReference type="NCBI Taxonomy" id="243160"/>
    <lineage>
        <taxon>Bacteria</taxon>
        <taxon>Pseudomonadati</taxon>
        <taxon>Pseudomonadota</taxon>
        <taxon>Betaproteobacteria</taxon>
        <taxon>Burkholderiales</taxon>
        <taxon>Burkholderiaceae</taxon>
        <taxon>Burkholderia</taxon>
        <taxon>pseudomallei group</taxon>
    </lineage>
</organism>
<evidence type="ECO:0000255" key="1">
    <source>
        <dbReference type="HAMAP-Rule" id="MF_00368"/>
    </source>
</evidence>
<evidence type="ECO:0000305" key="2"/>
<comment type="function">
    <text evidence="1">Forms part of the ribosomal stalk which helps the ribosome interact with GTP-bound translation factors. Is thus essential for accurate translation.</text>
</comment>
<comment type="subunit">
    <text evidence="1">Homodimer. Part of the ribosomal stalk of the 50S ribosomal subunit. Forms a multimeric L10(L12)X complex, where L10 forms an elongated spine to which 2 to 4 L12 dimers bind in a sequential fashion. Binds GTP-bound translation factors.</text>
</comment>
<comment type="similarity">
    <text evidence="1">Belongs to the bacterial ribosomal protein bL12 family.</text>
</comment>
<accession>Q62GJ6</accession>